<feature type="chain" id="PRO_1000077681" description="GTPase Der">
    <location>
        <begin position="1"/>
        <end position="442"/>
    </location>
</feature>
<feature type="domain" description="EngA-type G 1">
    <location>
        <begin position="2"/>
        <end position="167"/>
    </location>
</feature>
<feature type="domain" description="EngA-type G 2">
    <location>
        <begin position="175"/>
        <end position="351"/>
    </location>
</feature>
<feature type="domain" description="KH-like" evidence="1">
    <location>
        <begin position="352"/>
        <end position="436"/>
    </location>
</feature>
<feature type="binding site" evidence="1">
    <location>
        <begin position="8"/>
        <end position="15"/>
    </location>
    <ligand>
        <name>GTP</name>
        <dbReference type="ChEBI" id="CHEBI:37565"/>
        <label>1</label>
    </ligand>
</feature>
<feature type="binding site" evidence="1">
    <location>
        <begin position="55"/>
        <end position="59"/>
    </location>
    <ligand>
        <name>GTP</name>
        <dbReference type="ChEBI" id="CHEBI:37565"/>
        <label>1</label>
    </ligand>
</feature>
<feature type="binding site" evidence="1">
    <location>
        <begin position="119"/>
        <end position="122"/>
    </location>
    <ligand>
        <name>GTP</name>
        <dbReference type="ChEBI" id="CHEBI:37565"/>
        <label>1</label>
    </ligand>
</feature>
<feature type="binding site" evidence="1">
    <location>
        <begin position="181"/>
        <end position="188"/>
    </location>
    <ligand>
        <name>GTP</name>
        <dbReference type="ChEBI" id="CHEBI:37565"/>
        <label>2</label>
    </ligand>
</feature>
<feature type="binding site" evidence="1">
    <location>
        <begin position="228"/>
        <end position="232"/>
    </location>
    <ligand>
        <name>GTP</name>
        <dbReference type="ChEBI" id="CHEBI:37565"/>
        <label>2</label>
    </ligand>
</feature>
<feature type="binding site" evidence="1">
    <location>
        <begin position="293"/>
        <end position="296"/>
    </location>
    <ligand>
        <name>GTP</name>
        <dbReference type="ChEBI" id="CHEBI:37565"/>
        <label>2</label>
    </ligand>
</feature>
<protein>
    <recommendedName>
        <fullName evidence="1">GTPase Der</fullName>
    </recommendedName>
    <alternativeName>
        <fullName evidence="1">GTP-binding protein EngA</fullName>
    </alternativeName>
</protein>
<proteinExistence type="inferred from homology"/>
<name>DER_UREP2</name>
<accession>B1AJ22</accession>
<gene>
    <name evidence="1" type="primary">der</name>
    <name type="synonym">engA</name>
    <name type="ordered locus">UPA3_0399</name>
</gene>
<organism>
    <name type="scientific">Ureaplasma parvum serovar 3 (strain ATCC 27815 / 27 / NCTC 11736)</name>
    <dbReference type="NCBI Taxonomy" id="505682"/>
    <lineage>
        <taxon>Bacteria</taxon>
        <taxon>Bacillati</taxon>
        <taxon>Mycoplasmatota</taxon>
        <taxon>Mycoplasmoidales</taxon>
        <taxon>Mycoplasmoidaceae</taxon>
        <taxon>Ureaplasma</taxon>
    </lineage>
</organism>
<comment type="function">
    <text evidence="1">GTPase that plays an essential role in the late steps of ribosome biogenesis.</text>
</comment>
<comment type="subunit">
    <text evidence="1">Associates with the 50S ribosomal subunit.</text>
</comment>
<comment type="similarity">
    <text evidence="1">Belongs to the TRAFAC class TrmE-Era-EngA-EngB-Septin-like GTPase superfamily. EngA (Der) GTPase family.</text>
</comment>
<evidence type="ECO:0000255" key="1">
    <source>
        <dbReference type="HAMAP-Rule" id="MF_00195"/>
    </source>
</evidence>
<dbReference type="EMBL" id="CP000942">
    <property type="protein sequence ID" value="ACA33183.1"/>
    <property type="molecule type" value="Genomic_DNA"/>
</dbReference>
<dbReference type="RefSeq" id="WP_006688696.1">
    <property type="nucleotide sequence ID" value="NC_010503.1"/>
</dbReference>
<dbReference type="SMR" id="B1AJ22"/>
<dbReference type="GeneID" id="29672164"/>
<dbReference type="KEGG" id="upa:UPA3_0399"/>
<dbReference type="HOGENOM" id="CLU_016077_6_2_14"/>
<dbReference type="Proteomes" id="UP000002162">
    <property type="component" value="Chromosome"/>
</dbReference>
<dbReference type="GO" id="GO:0005525">
    <property type="term" value="F:GTP binding"/>
    <property type="evidence" value="ECO:0007669"/>
    <property type="project" value="UniProtKB-UniRule"/>
</dbReference>
<dbReference type="GO" id="GO:0043022">
    <property type="term" value="F:ribosome binding"/>
    <property type="evidence" value="ECO:0007669"/>
    <property type="project" value="TreeGrafter"/>
</dbReference>
<dbReference type="GO" id="GO:0042254">
    <property type="term" value="P:ribosome biogenesis"/>
    <property type="evidence" value="ECO:0007669"/>
    <property type="project" value="UniProtKB-KW"/>
</dbReference>
<dbReference type="CDD" id="cd01894">
    <property type="entry name" value="EngA1"/>
    <property type="match status" value="1"/>
</dbReference>
<dbReference type="CDD" id="cd01895">
    <property type="entry name" value="EngA2"/>
    <property type="match status" value="1"/>
</dbReference>
<dbReference type="FunFam" id="3.30.300.20:FF:000004">
    <property type="entry name" value="GTPase Der"/>
    <property type="match status" value="1"/>
</dbReference>
<dbReference type="FunFam" id="3.40.50.300:FF:000040">
    <property type="entry name" value="GTPase Der"/>
    <property type="match status" value="1"/>
</dbReference>
<dbReference type="FunFam" id="3.40.50.300:FF:000057">
    <property type="entry name" value="GTPase Der"/>
    <property type="match status" value="1"/>
</dbReference>
<dbReference type="Gene3D" id="3.30.300.20">
    <property type="match status" value="1"/>
</dbReference>
<dbReference type="Gene3D" id="3.40.50.300">
    <property type="entry name" value="P-loop containing nucleotide triphosphate hydrolases"/>
    <property type="match status" value="2"/>
</dbReference>
<dbReference type="HAMAP" id="MF_00195">
    <property type="entry name" value="GTPase_Der"/>
    <property type="match status" value="1"/>
</dbReference>
<dbReference type="InterPro" id="IPR031166">
    <property type="entry name" value="G_ENGA"/>
</dbReference>
<dbReference type="InterPro" id="IPR006073">
    <property type="entry name" value="GTP-bd"/>
</dbReference>
<dbReference type="InterPro" id="IPR016484">
    <property type="entry name" value="GTPase_Der"/>
</dbReference>
<dbReference type="InterPro" id="IPR032859">
    <property type="entry name" value="KH_dom-like"/>
</dbReference>
<dbReference type="InterPro" id="IPR015946">
    <property type="entry name" value="KH_dom-like_a/b"/>
</dbReference>
<dbReference type="InterPro" id="IPR027417">
    <property type="entry name" value="P-loop_NTPase"/>
</dbReference>
<dbReference type="InterPro" id="IPR005225">
    <property type="entry name" value="Small_GTP-bd"/>
</dbReference>
<dbReference type="NCBIfam" id="TIGR03594">
    <property type="entry name" value="GTPase_EngA"/>
    <property type="match status" value="1"/>
</dbReference>
<dbReference type="NCBIfam" id="TIGR00231">
    <property type="entry name" value="small_GTP"/>
    <property type="match status" value="2"/>
</dbReference>
<dbReference type="PANTHER" id="PTHR43834">
    <property type="entry name" value="GTPASE DER"/>
    <property type="match status" value="1"/>
</dbReference>
<dbReference type="PANTHER" id="PTHR43834:SF6">
    <property type="entry name" value="GTPASE DER"/>
    <property type="match status" value="1"/>
</dbReference>
<dbReference type="Pfam" id="PF14714">
    <property type="entry name" value="KH_dom-like"/>
    <property type="match status" value="1"/>
</dbReference>
<dbReference type="Pfam" id="PF01926">
    <property type="entry name" value="MMR_HSR1"/>
    <property type="match status" value="2"/>
</dbReference>
<dbReference type="PIRSF" id="PIRSF006485">
    <property type="entry name" value="GTP-binding_EngA"/>
    <property type="match status" value="1"/>
</dbReference>
<dbReference type="PRINTS" id="PR00326">
    <property type="entry name" value="GTP1OBG"/>
</dbReference>
<dbReference type="SUPFAM" id="SSF52540">
    <property type="entry name" value="P-loop containing nucleoside triphosphate hydrolases"/>
    <property type="match status" value="2"/>
</dbReference>
<dbReference type="PROSITE" id="PS51712">
    <property type="entry name" value="G_ENGA"/>
    <property type="match status" value="2"/>
</dbReference>
<reference key="1">
    <citation type="submission" date="2008-02" db="EMBL/GenBank/DDBJ databases">
        <title>Genome sequence of Ureaplasma parvum serovar 3.</title>
        <authorList>
            <person name="Methe B.A."/>
            <person name="Glass J."/>
            <person name="Waites K."/>
            <person name="Shrivastava S."/>
        </authorList>
    </citation>
    <scope>NUCLEOTIDE SEQUENCE [LARGE SCALE GENOMIC DNA]</scope>
    <source>
        <strain>ATCC 27815 / 27 / NCTC 11736</strain>
    </source>
</reference>
<sequence>MRTIAIVGKPNVGKSSLFNRILMRRKSIVDDQPGVTRDRIYDIGNWLTRSFMLIDTGGIISSKDTYQDNINEQVLFAINEANTIIFLVSAKDGINNDDKKIAKMLKEKAKDKKIILVINKIESEKYYLNEGELYSFGFGKFFKISAEHGIGMGDLLDELVKDMPIQNNLEKQERFKFCIIGRPNVGKSSLTNTILGEQRVIVNAEAGSTRDSIDNDFNYYNKKYTIIDTAGIRRKGKIVESVEKYAVLRTKKAIERSQLILLVLDGSEPFKEQDEVVGGLAYNANIPTIIIVNKWDNIINKNSHTMEMVKKQIRSQFKYLSWAPIVFVSALDNKRIHTIFEAIEFVREQAMRKIATSLLNDVVIKANAFQEPPPFKGGRISISYIVQVQSQIPTFVLKCNNPKFLHFSYARYIENEIRKAFGFDSVPITLYWQDKNKKLRGE</sequence>
<keyword id="KW-0342">GTP-binding</keyword>
<keyword id="KW-0547">Nucleotide-binding</keyword>
<keyword id="KW-0677">Repeat</keyword>
<keyword id="KW-0690">Ribosome biogenesis</keyword>